<organism>
    <name type="scientific">Albidiferax ferrireducens (strain ATCC BAA-621 / DSM 15236 / T118)</name>
    <name type="common">Rhodoferax ferrireducens</name>
    <dbReference type="NCBI Taxonomy" id="338969"/>
    <lineage>
        <taxon>Bacteria</taxon>
        <taxon>Pseudomonadati</taxon>
        <taxon>Pseudomonadota</taxon>
        <taxon>Betaproteobacteria</taxon>
        <taxon>Burkholderiales</taxon>
        <taxon>Comamonadaceae</taxon>
        <taxon>Rhodoferax</taxon>
    </lineage>
</organism>
<protein>
    <recommendedName>
        <fullName evidence="1">Imidazoleglycerol-phosphate dehydratase</fullName>
        <shortName evidence="1">IGPD</shortName>
        <ecNumber evidence="1">4.2.1.19</ecNumber>
    </recommendedName>
</protein>
<dbReference type="EC" id="4.2.1.19" evidence="1"/>
<dbReference type="EMBL" id="CP000267">
    <property type="protein sequence ID" value="ABD70659.1"/>
    <property type="molecule type" value="Genomic_DNA"/>
</dbReference>
<dbReference type="RefSeq" id="WP_011465225.1">
    <property type="nucleotide sequence ID" value="NC_007908.1"/>
</dbReference>
<dbReference type="SMR" id="Q21U94"/>
<dbReference type="STRING" id="338969.Rfer_2948"/>
<dbReference type="KEGG" id="rfr:Rfer_2948"/>
<dbReference type="eggNOG" id="COG0131">
    <property type="taxonomic scope" value="Bacteria"/>
</dbReference>
<dbReference type="HOGENOM" id="CLU_044308_3_0_4"/>
<dbReference type="OrthoDB" id="9790411at2"/>
<dbReference type="UniPathway" id="UPA00031">
    <property type="reaction ID" value="UER00011"/>
</dbReference>
<dbReference type="Proteomes" id="UP000008332">
    <property type="component" value="Chromosome"/>
</dbReference>
<dbReference type="GO" id="GO:0005737">
    <property type="term" value="C:cytoplasm"/>
    <property type="evidence" value="ECO:0007669"/>
    <property type="project" value="UniProtKB-SubCell"/>
</dbReference>
<dbReference type="GO" id="GO:0004424">
    <property type="term" value="F:imidazoleglycerol-phosphate dehydratase activity"/>
    <property type="evidence" value="ECO:0007669"/>
    <property type="project" value="UniProtKB-UniRule"/>
</dbReference>
<dbReference type="GO" id="GO:0000105">
    <property type="term" value="P:L-histidine biosynthetic process"/>
    <property type="evidence" value="ECO:0007669"/>
    <property type="project" value="UniProtKB-UniRule"/>
</dbReference>
<dbReference type="CDD" id="cd07914">
    <property type="entry name" value="IGPD"/>
    <property type="match status" value="1"/>
</dbReference>
<dbReference type="FunFam" id="3.30.230.40:FF:000002">
    <property type="entry name" value="Imidazoleglycerol-phosphate dehydratase"/>
    <property type="match status" value="1"/>
</dbReference>
<dbReference type="FunFam" id="3.30.230.40:FF:000003">
    <property type="entry name" value="Imidazoleglycerol-phosphate dehydratase HisB"/>
    <property type="match status" value="1"/>
</dbReference>
<dbReference type="Gene3D" id="3.30.230.40">
    <property type="entry name" value="Imidazole glycerol phosphate dehydratase, domain 1"/>
    <property type="match status" value="2"/>
</dbReference>
<dbReference type="HAMAP" id="MF_00076">
    <property type="entry name" value="HisB"/>
    <property type="match status" value="1"/>
</dbReference>
<dbReference type="InterPro" id="IPR038494">
    <property type="entry name" value="IGPD_sf"/>
</dbReference>
<dbReference type="InterPro" id="IPR000807">
    <property type="entry name" value="ImidazoleglycerolP_deHydtase"/>
</dbReference>
<dbReference type="InterPro" id="IPR020565">
    <property type="entry name" value="ImidazoleglycerP_deHydtase_CS"/>
</dbReference>
<dbReference type="InterPro" id="IPR020568">
    <property type="entry name" value="Ribosomal_Su5_D2-typ_SF"/>
</dbReference>
<dbReference type="NCBIfam" id="NF002106">
    <property type="entry name" value="PRK00951.1-1"/>
    <property type="match status" value="1"/>
</dbReference>
<dbReference type="NCBIfam" id="NF002109">
    <property type="entry name" value="PRK00951.1-5"/>
    <property type="match status" value="1"/>
</dbReference>
<dbReference type="NCBIfam" id="NF002111">
    <property type="entry name" value="PRK00951.2-1"/>
    <property type="match status" value="1"/>
</dbReference>
<dbReference type="NCBIfam" id="NF002114">
    <property type="entry name" value="PRK00951.2-4"/>
    <property type="match status" value="1"/>
</dbReference>
<dbReference type="PANTHER" id="PTHR23133:SF2">
    <property type="entry name" value="IMIDAZOLEGLYCEROL-PHOSPHATE DEHYDRATASE"/>
    <property type="match status" value="1"/>
</dbReference>
<dbReference type="PANTHER" id="PTHR23133">
    <property type="entry name" value="IMIDAZOLEGLYCEROL-PHOSPHATE DEHYDRATASE HIS7"/>
    <property type="match status" value="1"/>
</dbReference>
<dbReference type="Pfam" id="PF00475">
    <property type="entry name" value="IGPD"/>
    <property type="match status" value="1"/>
</dbReference>
<dbReference type="SUPFAM" id="SSF54211">
    <property type="entry name" value="Ribosomal protein S5 domain 2-like"/>
    <property type="match status" value="2"/>
</dbReference>
<dbReference type="PROSITE" id="PS00954">
    <property type="entry name" value="IGP_DEHYDRATASE_1"/>
    <property type="match status" value="1"/>
</dbReference>
<dbReference type="PROSITE" id="PS00955">
    <property type="entry name" value="IGP_DEHYDRATASE_2"/>
    <property type="match status" value="1"/>
</dbReference>
<keyword id="KW-0028">Amino-acid biosynthesis</keyword>
<keyword id="KW-0963">Cytoplasm</keyword>
<keyword id="KW-0368">Histidine biosynthesis</keyword>
<keyword id="KW-0456">Lyase</keyword>
<keyword id="KW-1185">Reference proteome</keyword>
<evidence type="ECO:0000255" key="1">
    <source>
        <dbReference type="HAMAP-Rule" id="MF_00076"/>
    </source>
</evidence>
<sequence length="204" mass="22137">MSTPIALVPARTAEVTRNTAETRITVKVNLDGSGQSHLSTGIGFFDHMLDQIARHGLIDLDIQATGDLHIDGHHTVEDVGITLGQAVHQAVGDKKGIRRYGHAYVPLDEALSRVVIDFSGRPGLVMDVPFKSGMIGTFDAQLAHEFFQGFVNHAFVTLHIDNLKGENAHHQAETVFKAFARALRAALEFDPRALGQIPSTKGTL</sequence>
<gene>
    <name evidence="1" type="primary">hisB</name>
    <name type="ordered locus">Rfer_2948</name>
</gene>
<feature type="chain" id="PRO_0000336340" description="Imidazoleglycerol-phosphate dehydratase">
    <location>
        <begin position="1"/>
        <end position="204"/>
    </location>
</feature>
<comment type="catalytic activity">
    <reaction evidence="1">
        <text>D-erythro-1-(imidazol-4-yl)glycerol 3-phosphate = 3-(imidazol-4-yl)-2-oxopropyl phosphate + H2O</text>
        <dbReference type="Rhea" id="RHEA:11040"/>
        <dbReference type="ChEBI" id="CHEBI:15377"/>
        <dbReference type="ChEBI" id="CHEBI:57766"/>
        <dbReference type="ChEBI" id="CHEBI:58278"/>
        <dbReference type="EC" id="4.2.1.19"/>
    </reaction>
</comment>
<comment type="pathway">
    <text evidence="1">Amino-acid biosynthesis; L-histidine biosynthesis; L-histidine from 5-phospho-alpha-D-ribose 1-diphosphate: step 6/9.</text>
</comment>
<comment type="subcellular location">
    <subcellularLocation>
        <location evidence="1">Cytoplasm</location>
    </subcellularLocation>
</comment>
<comment type="similarity">
    <text evidence="1">Belongs to the imidazoleglycerol-phosphate dehydratase family.</text>
</comment>
<reference key="1">
    <citation type="submission" date="2006-02" db="EMBL/GenBank/DDBJ databases">
        <title>Complete sequence of chromosome of Rhodoferax ferrireducens DSM 15236.</title>
        <authorList>
            <person name="Copeland A."/>
            <person name="Lucas S."/>
            <person name="Lapidus A."/>
            <person name="Barry K."/>
            <person name="Detter J.C."/>
            <person name="Glavina del Rio T."/>
            <person name="Hammon N."/>
            <person name="Israni S."/>
            <person name="Pitluck S."/>
            <person name="Brettin T."/>
            <person name="Bruce D."/>
            <person name="Han C."/>
            <person name="Tapia R."/>
            <person name="Gilna P."/>
            <person name="Kiss H."/>
            <person name="Schmutz J."/>
            <person name="Larimer F."/>
            <person name="Land M."/>
            <person name="Kyrpides N."/>
            <person name="Ivanova N."/>
            <person name="Richardson P."/>
        </authorList>
    </citation>
    <scope>NUCLEOTIDE SEQUENCE [LARGE SCALE GENOMIC DNA]</scope>
    <source>
        <strain>ATCC BAA-621 / DSM 15236 / T118</strain>
    </source>
</reference>
<accession>Q21U94</accession>
<proteinExistence type="inferred from homology"/>
<name>HIS7_ALBFT</name>